<evidence type="ECO:0000255" key="1">
    <source>
        <dbReference type="HAMAP-Rule" id="MF_00061"/>
    </source>
</evidence>
<comment type="function">
    <text evidence="1">Catalyzes the phosphorylation of the position 2 hydroxy group of 4-diphosphocytidyl-2C-methyl-D-erythritol.</text>
</comment>
<comment type="catalytic activity">
    <reaction evidence="1">
        <text>4-CDP-2-C-methyl-D-erythritol + ATP = 4-CDP-2-C-methyl-D-erythritol 2-phosphate + ADP + H(+)</text>
        <dbReference type="Rhea" id="RHEA:18437"/>
        <dbReference type="ChEBI" id="CHEBI:15378"/>
        <dbReference type="ChEBI" id="CHEBI:30616"/>
        <dbReference type="ChEBI" id="CHEBI:57823"/>
        <dbReference type="ChEBI" id="CHEBI:57919"/>
        <dbReference type="ChEBI" id="CHEBI:456216"/>
        <dbReference type="EC" id="2.7.1.148"/>
    </reaction>
</comment>
<comment type="pathway">
    <text evidence="1">Isoprenoid biosynthesis; isopentenyl diphosphate biosynthesis via DXP pathway; isopentenyl diphosphate from 1-deoxy-D-xylulose 5-phosphate: step 3/6.</text>
</comment>
<comment type="similarity">
    <text evidence="1">Belongs to the GHMP kinase family. IspE subfamily.</text>
</comment>
<organism>
    <name type="scientific">Shewanella sp. (strain W3-18-1)</name>
    <dbReference type="NCBI Taxonomy" id="351745"/>
    <lineage>
        <taxon>Bacteria</taxon>
        <taxon>Pseudomonadati</taxon>
        <taxon>Pseudomonadota</taxon>
        <taxon>Gammaproteobacteria</taxon>
        <taxon>Alteromonadales</taxon>
        <taxon>Shewanellaceae</taxon>
        <taxon>Shewanella</taxon>
    </lineage>
</organism>
<accession>A1RNE4</accession>
<protein>
    <recommendedName>
        <fullName evidence="1">4-diphosphocytidyl-2-C-methyl-D-erythritol kinase</fullName>
        <shortName evidence="1">CMK</shortName>
        <ecNumber evidence="1">2.7.1.148</ecNumber>
    </recommendedName>
    <alternativeName>
        <fullName evidence="1">4-(cytidine-5'-diphospho)-2-C-methyl-D-erythritol kinase</fullName>
    </alternativeName>
</protein>
<gene>
    <name evidence="1" type="primary">ispE</name>
    <name type="ordered locus">Sputw3181_3377</name>
</gene>
<reference key="1">
    <citation type="submission" date="2006-12" db="EMBL/GenBank/DDBJ databases">
        <title>Complete sequence of Shewanella sp. W3-18-1.</title>
        <authorList>
            <consortium name="US DOE Joint Genome Institute"/>
            <person name="Copeland A."/>
            <person name="Lucas S."/>
            <person name="Lapidus A."/>
            <person name="Barry K."/>
            <person name="Detter J.C."/>
            <person name="Glavina del Rio T."/>
            <person name="Hammon N."/>
            <person name="Israni S."/>
            <person name="Dalin E."/>
            <person name="Tice H."/>
            <person name="Pitluck S."/>
            <person name="Chain P."/>
            <person name="Malfatti S."/>
            <person name="Shin M."/>
            <person name="Vergez L."/>
            <person name="Schmutz J."/>
            <person name="Larimer F."/>
            <person name="Land M."/>
            <person name="Hauser L."/>
            <person name="Kyrpides N."/>
            <person name="Lykidis A."/>
            <person name="Tiedje J."/>
            <person name="Richardson P."/>
        </authorList>
    </citation>
    <scope>NUCLEOTIDE SEQUENCE [LARGE SCALE GENOMIC DNA]</scope>
    <source>
        <strain>W3-18-1</strain>
    </source>
</reference>
<name>ISPE_SHESW</name>
<dbReference type="EC" id="2.7.1.148" evidence="1"/>
<dbReference type="EMBL" id="CP000503">
    <property type="protein sequence ID" value="ABM26189.1"/>
    <property type="molecule type" value="Genomic_DNA"/>
</dbReference>
<dbReference type="RefSeq" id="WP_011790633.1">
    <property type="nucleotide sequence ID" value="NC_008750.1"/>
</dbReference>
<dbReference type="SMR" id="A1RNE4"/>
<dbReference type="KEGG" id="shw:Sputw3181_3377"/>
<dbReference type="HOGENOM" id="CLU_053057_3_0_6"/>
<dbReference type="UniPathway" id="UPA00056">
    <property type="reaction ID" value="UER00094"/>
</dbReference>
<dbReference type="Proteomes" id="UP000002597">
    <property type="component" value="Chromosome"/>
</dbReference>
<dbReference type="GO" id="GO:0050515">
    <property type="term" value="F:4-(cytidine 5'-diphospho)-2-C-methyl-D-erythritol kinase activity"/>
    <property type="evidence" value="ECO:0007669"/>
    <property type="project" value="UniProtKB-UniRule"/>
</dbReference>
<dbReference type="GO" id="GO:0005524">
    <property type="term" value="F:ATP binding"/>
    <property type="evidence" value="ECO:0007669"/>
    <property type="project" value="UniProtKB-UniRule"/>
</dbReference>
<dbReference type="GO" id="GO:0019288">
    <property type="term" value="P:isopentenyl diphosphate biosynthetic process, methylerythritol 4-phosphate pathway"/>
    <property type="evidence" value="ECO:0007669"/>
    <property type="project" value="UniProtKB-UniRule"/>
</dbReference>
<dbReference type="GO" id="GO:0016114">
    <property type="term" value="P:terpenoid biosynthetic process"/>
    <property type="evidence" value="ECO:0007669"/>
    <property type="project" value="InterPro"/>
</dbReference>
<dbReference type="FunFam" id="3.30.230.10:FF:000022">
    <property type="entry name" value="4-diphosphocytidyl-2-C-methyl-D-erythritol kinase"/>
    <property type="match status" value="1"/>
</dbReference>
<dbReference type="Gene3D" id="3.30.230.10">
    <property type="match status" value="1"/>
</dbReference>
<dbReference type="Gene3D" id="3.30.70.890">
    <property type="entry name" value="GHMP kinase, C-terminal domain"/>
    <property type="match status" value="1"/>
</dbReference>
<dbReference type="HAMAP" id="MF_00061">
    <property type="entry name" value="IspE"/>
    <property type="match status" value="1"/>
</dbReference>
<dbReference type="InterPro" id="IPR013750">
    <property type="entry name" value="GHMP_kinase_C_dom"/>
</dbReference>
<dbReference type="InterPro" id="IPR036554">
    <property type="entry name" value="GHMP_kinase_C_sf"/>
</dbReference>
<dbReference type="InterPro" id="IPR006204">
    <property type="entry name" value="GHMP_kinase_N_dom"/>
</dbReference>
<dbReference type="InterPro" id="IPR004424">
    <property type="entry name" value="IspE"/>
</dbReference>
<dbReference type="InterPro" id="IPR020568">
    <property type="entry name" value="Ribosomal_Su5_D2-typ_SF"/>
</dbReference>
<dbReference type="InterPro" id="IPR014721">
    <property type="entry name" value="Ribsml_uS5_D2-typ_fold_subgr"/>
</dbReference>
<dbReference type="NCBIfam" id="TIGR00154">
    <property type="entry name" value="ispE"/>
    <property type="match status" value="1"/>
</dbReference>
<dbReference type="PANTHER" id="PTHR43527">
    <property type="entry name" value="4-DIPHOSPHOCYTIDYL-2-C-METHYL-D-ERYTHRITOL KINASE, CHLOROPLASTIC"/>
    <property type="match status" value="1"/>
</dbReference>
<dbReference type="PANTHER" id="PTHR43527:SF2">
    <property type="entry name" value="4-DIPHOSPHOCYTIDYL-2-C-METHYL-D-ERYTHRITOL KINASE, CHLOROPLASTIC"/>
    <property type="match status" value="1"/>
</dbReference>
<dbReference type="Pfam" id="PF08544">
    <property type="entry name" value="GHMP_kinases_C"/>
    <property type="match status" value="1"/>
</dbReference>
<dbReference type="Pfam" id="PF00288">
    <property type="entry name" value="GHMP_kinases_N"/>
    <property type="match status" value="1"/>
</dbReference>
<dbReference type="PIRSF" id="PIRSF010376">
    <property type="entry name" value="IspE"/>
    <property type="match status" value="1"/>
</dbReference>
<dbReference type="SUPFAM" id="SSF55060">
    <property type="entry name" value="GHMP Kinase, C-terminal domain"/>
    <property type="match status" value="1"/>
</dbReference>
<dbReference type="SUPFAM" id="SSF54211">
    <property type="entry name" value="Ribosomal protein S5 domain 2-like"/>
    <property type="match status" value="1"/>
</dbReference>
<feature type="chain" id="PRO_1000007894" description="4-diphosphocytidyl-2-C-methyl-D-erythritol kinase">
    <location>
        <begin position="1"/>
        <end position="284"/>
    </location>
</feature>
<feature type="active site" evidence="1">
    <location>
        <position position="14"/>
    </location>
</feature>
<feature type="active site" evidence="1">
    <location>
        <position position="140"/>
    </location>
</feature>
<feature type="binding site" evidence="1">
    <location>
        <begin position="98"/>
        <end position="108"/>
    </location>
    <ligand>
        <name>ATP</name>
        <dbReference type="ChEBI" id="CHEBI:30616"/>
    </ligand>
</feature>
<proteinExistence type="inferred from homology"/>
<keyword id="KW-0067">ATP-binding</keyword>
<keyword id="KW-0414">Isoprene biosynthesis</keyword>
<keyword id="KW-0418">Kinase</keyword>
<keyword id="KW-0547">Nucleotide-binding</keyword>
<keyword id="KW-0808">Transferase</keyword>
<sequence>MSAAISRNWPAPAKLNLFLHINGRRTDGYHELQTLFQFIDYCDMLDFKVTDSSELILHSNMAGVVADSDNLILRAAKSLQQMTSFKGGAEIWLDKRLPMGGGLGGGSSDAATTLVALNTLWNTQLSTEELAKIGLKLGADIPVFIHGFAAFAEGIGERLQVVSPPEPWYLVIAPDAHVSTAEVFQDPLLPRNTPKLAIDTLMSQAWINDCQKLVVSKYPQVAKALGWLLEYAPSRMTGTGACVFGEFTQQQQALAALAKLPSDMQGFVAKGMNISPLITRLNHP</sequence>